<evidence type="ECO:0000256" key="1">
    <source>
        <dbReference type="SAM" id="MobiDB-lite"/>
    </source>
</evidence>
<evidence type="ECO:0000303" key="2">
    <source>
    </source>
</evidence>
<evidence type="ECO:0000305" key="3"/>
<comment type="function">
    <text evidence="2">A P subtype restriction enzyme that recognizes the double-stranded sequence 5'-CTCGAG-3' and cleaves after C-1.</text>
</comment>
<comment type="catalytic activity">
    <reaction>
        <text>Endonucleolytic cleavage of DNA to give specific double-stranded fragments with terminal 5'-phosphates.</text>
        <dbReference type="EC" id="3.1.21.4"/>
    </reaction>
</comment>
<comment type="similarity">
    <text evidence="3">Belongs to the XhoI type II restriction endonuclease family.</text>
</comment>
<name>T2A1_AZOBR</name>
<feature type="chain" id="PRO_0000077277" description="Type II restriction enzyme AbrI">
    <location>
        <begin position="1"/>
        <end position="222"/>
    </location>
</feature>
<feature type="region of interest" description="Disordered" evidence="1">
    <location>
        <begin position="21"/>
        <end position="45"/>
    </location>
</feature>
<feature type="region of interest" description="Disordered" evidence="1">
    <location>
        <begin position="161"/>
        <end position="222"/>
    </location>
</feature>
<feature type="compositionally biased region" description="Basic and acidic residues" evidence="1">
    <location>
        <begin position="22"/>
        <end position="42"/>
    </location>
</feature>
<feature type="compositionally biased region" description="Low complexity" evidence="1">
    <location>
        <begin position="188"/>
        <end position="202"/>
    </location>
</feature>
<gene>
    <name type="primary">abrIR</name>
</gene>
<proteinExistence type="inferred from homology"/>
<keyword id="KW-0255">Endonuclease</keyword>
<keyword id="KW-0378">Hydrolase</keyword>
<keyword id="KW-0540">Nuclease</keyword>
<keyword id="KW-0680">Restriction system</keyword>
<accession>P26919</accession>
<reference key="1">
    <citation type="submission" date="1991-10" db="EMBL/GenBank/DDBJ databases">
        <title>AbrI restriction modification system from Azospirillium brasilense, molecular cloning and characterization of its genes.</title>
        <authorList>
            <person name="Schwabe G."/>
            <person name="Helke A."/>
            <person name="Klingmueller W."/>
        </authorList>
    </citation>
    <scope>NUCLEOTIDE SEQUENCE [GENOMIC DNA]</scope>
    <source>
        <strain>ATCC 29711 / DSM 1844 / Sp35</strain>
    </source>
</reference>
<reference key="2">
    <citation type="journal article" date="2003" name="Nucleic Acids Res.">
        <title>A nomenclature for restriction enzymes, DNA methyltransferases, homing endonucleases and their genes.</title>
        <authorList>
            <person name="Roberts R.J."/>
            <person name="Belfort M."/>
            <person name="Bestor T."/>
            <person name="Bhagwat A.S."/>
            <person name="Bickle T.A."/>
            <person name="Bitinaite J."/>
            <person name="Blumenthal R.M."/>
            <person name="Degtyarev S.K."/>
            <person name="Dryden D.T."/>
            <person name="Dybvig K."/>
            <person name="Firman K."/>
            <person name="Gromova E.S."/>
            <person name="Gumport R.I."/>
            <person name="Halford S.E."/>
            <person name="Hattman S."/>
            <person name="Heitman J."/>
            <person name="Hornby D.P."/>
            <person name="Janulaitis A."/>
            <person name="Jeltsch A."/>
            <person name="Josephsen J."/>
            <person name="Kiss A."/>
            <person name="Klaenhammer T.R."/>
            <person name="Kobayashi I."/>
            <person name="Kong H."/>
            <person name="Krueger D.H."/>
            <person name="Lacks S."/>
            <person name="Marinus M.G."/>
            <person name="Miyahara M."/>
            <person name="Morgan R.D."/>
            <person name="Murray N.E."/>
            <person name="Nagaraja V."/>
            <person name="Piekarowicz A."/>
            <person name="Pingoud A."/>
            <person name="Raleigh E."/>
            <person name="Rao D.N."/>
            <person name="Reich N."/>
            <person name="Repin V.E."/>
            <person name="Selker E.U."/>
            <person name="Shaw P.C."/>
            <person name="Stein D.C."/>
            <person name="Stoddard B.L."/>
            <person name="Szybalski W."/>
            <person name="Trautner T.A."/>
            <person name="Van Etten J.L."/>
            <person name="Vitor J.M."/>
            <person name="Wilson G.G."/>
            <person name="Xu S.Y."/>
        </authorList>
    </citation>
    <scope>NOMENCLATURE</scope>
    <scope>SUBTYPE</scope>
</reference>
<sequence length="222" mass="25260">MALELADYERKARESVMAFWGNREKARQKQQESGKPDQGERRRDRRKNMDGFCALVIDIIRANGLHRAEIHQKRALLTLPGYFRPTKLWDLLVIQDRRLVAALEFKSQVGPSFGNNFNNRTEEAIGTAHDLWTAYREGAFGQSPRPFVGWLMLVEDAPESNQRRADTSPHFRCSRSSRAHPTYGGMTSSASGSSRSSFTPRPRSSPRRAPPPRQGRIPSPRI</sequence>
<dbReference type="EC" id="3.1.21.4"/>
<dbReference type="EMBL" id="X62690">
    <property type="protein sequence ID" value="CAA44567.1"/>
    <property type="molecule type" value="Genomic_DNA"/>
</dbReference>
<dbReference type="REBASE" id="191893">
    <property type="entry name" value="Apa1447ORF1853P"/>
</dbReference>
<dbReference type="REBASE" id="353100">
    <property type="entry name" value="LxyHY24ORF1216P"/>
</dbReference>
<dbReference type="REBASE" id="8">
    <property type="entry name" value="AbrI"/>
</dbReference>
<dbReference type="GO" id="GO:0003677">
    <property type="term" value="F:DNA binding"/>
    <property type="evidence" value="ECO:0007669"/>
    <property type="project" value="InterPro"/>
</dbReference>
<dbReference type="GO" id="GO:0009036">
    <property type="term" value="F:type II site-specific deoxyribonuclease activity"/>
    <property type="evidence" value="ECO:0007669"/>
    <property type="project" value="UniProtKB-EC"/>
</dbReference>
<dbReference type="GO" id="GO:0009307">
    <property type="term" value="P:DNA restriction-modification system"/>
    <property type="evidence" value="ECO:0007669"/>
    <property type="project" value="UniProtKB-KW"/>
</dbReference>
<dbReference type="InterPro" id="IPR007636">
    <property type="entry name" value="Restrct_endonuc_II_XhoI"/>
</dbReference>
<dbReference type="Pfam" id="PF04555">
    <property type="entry name" value="XhoI"/>
    <property type="match status" value="1"/>
</dbReference>
<dbReference type="PIRSF" id="PIRSF000994">
    <property type="entry name" value="Restrict_endonuc_II_XhoI"/>
    <property type="match status" value="1"/>
</dbReference>
<organism>
    <name type="scientific">Azospirillum brasilense</name>
    <dbReference type="NCBI Taxonomy" id="192"/>
    <lineage>
        <taxon>Bacteria</taxon>
        <taxon>Pseudomonadati</taxon>
        <taxon>Pseudomonadota</taxon>
        <taxon>Alphaproteobacteria</taxon>
        <taxon>Rhodospirillales</taxon>
        <taxon>Azospirillaceae</taxon>
        <taxon>Azospirillum</taxon>
    </lineage>
</organism>
<protein>
    <recommendedName>
        <fullName evidence="2">Type II restriction enzyme AbrI</fullName>
        <shortName>R.AbrI</shortName>
        <ecNumber>3.1.21.4</ecNumber>
    </recommendedName>
    <alternativeName>
        <fullName>Endonuclease AbrI</fullName>
    </alternativeName>
    <alternativeName>
        <fullName>Type-2 restriction enzyme AbrI</fullName>
    </alternativeName>
</protein>